<accession>O77531</accession>
<name>B2MG_PITIR</name>
<proteinExistence type="inferred from homology"/>
<organism>
    <name type="scientific">Pithecia irrorata</name>
    <name type="common">Gray monk saki</name>
    <dbReference type="NCBI Taxonomy" id="30598"/>
    <lineage>
        <taxon>Eukaryota</taxon>
        <taxon>Metazoa</taxon>
        <taxon>Chordata</taxon>
        <taxon>Craniata</taxon>
        <taxon>Vertebrata</taxon>
        <taxon>Euteleostomi</taxon>
        <taxon>Mammalia</taxon>
        <taxon>Eutheria</taxon>
        <taxon>Euarchontoglires</taxon>
        <taxon>Primates</taxon>
        <taxon>Haplorrhini</taxon>
        <taxon>Platyrrhini</taxon>
        <taxon>Pitheciidae</taxon>
        <taxon>Pitheciinae</taxon>
        <taxon>Pithecia</taxon>
    </lineage>
</organism>
<evidence type="ECO:0000250" key="1"/>
<evidence type="ECO:0000255" key="2">
    <source>
        <dbReference type="PROSITE-ProRule" id="PRU00114"/>
    </source>
</evidence>
<evidence type="ECO:0000305" key="3"/>
<comment type="function">
    <text evidence="1">Component of the class I major histocompatibility complex (MHC). Involved in the presentation of peptide antigens to the immune system (By similarity).</text>
</comment>
<comment type="subunit">
    <text evidence="1">Heterodimer of an alpha chain and a beta chain. Beta-2-microglobulin is the beta-chain of major histocompatibility complex class I molecules (By similarity).</text>
</comment>
<comment type="subcellular location">
    <subcellularLocation>
        <location evidence="1">Secreted</location>
    </subcellularLocation>
</comment>
<comment type="similarity">
    <text evidence="3">Belongs to the beta-2-microglobulin family.</text>
</comment>
<keyword id="KW-1015">Disulfide bond</keyword>
<keyword id="KW-0391">Immunity</keyword>
<keyword id="KW-0393">Immunoglobulin domain</keyword>
<keyword id="KW-0490">MHC I</keyword>
<keyword id="KW-0964">Secreted</keyword>
<keyword id="KW-0732">Signal</keyword>
<reference key="1">
    <citation type="journal article" date="1998" name="Immunogenetics">
        <title>Beta-2-microglobulin in neotropical primates (Platyrrhini).</title>
        <authorList>
            <person name="Canavez F.C."/>
            <person name="Ladasky J.J."/>
            <person name="Muniz J.A.P.C."/>
            <person name="Seuanez H.N."/>
            <person name="Parham P."/>
        </authorList>
    </citation>
    <scope>NUCLEOTIDE SEQUENCE [GENOMIC DNA]</scope>
    <source>
        <tissue>Blood</tissue>
    </source>
</reference>
<gene>
    <name type="primary">B2M</name>
</gene>
<protein>
    <recommendedName>
        <fullName>Beta-2-microglobulin</fullName>
    </recommendedName>
</protein>
<feature type="signal peptide" evidence="1">
    <location>
        <begin position="1"/>
        <end position="20"/>
    </location>
</feature>
<feature type="chain" id="PRO_0000018788" description="Beta-2-microglobulin">
    <location>
        <begin position="21"/>
        <end position="119"/>
    </location>
</feature>
<feature type="domain" description="Ig-like C1-type">
    <location>
        <begin position="25"/>
        <end position="114"/>
    </location>
</feature>
<feature type="disulfide bond" evidence="2">
    <location>
        <begin position="45"/>
        <end position="100"/>
    </location>
</feature>
<sequence>MARFVVAALLVLLSLSGLEAIQHAPKIQVYSRHPAENGKPNFLNCYVSGFHPSDIEVDLLKNGKKIEKVEHSDLSFSKDWSFYLLYYTEFTPNDKDEYACRVSHMTFPAPKTVKWDRNM</sequence>
<dbReference type="EMBL" id="AF032072">
    <property type="protein sequence ID" value="AAC52103.1"/>
    <property type="molecule type" value="Genomic_DNA"/>
</dbReference>
<dbReference type="EMBL" id="AF032071">
    <property type="protein sequence ID" value="AAC52103.1"/>
    <property type="status" value="JOINED"/>
    <property type="molecule type" value="Genomic_DNA"/>
</dbReference>
<dbReference type="SMR" id="O77531"/>
<dbReference type="GO" id="GO:0005576">
    <property type="term" value="C:extracellular region"/>
    <property type="evidence" value="ECO:0007669"/>
    <property type="project" value="UniProtKB-SubCell"/>
</dbReference>
<dbReference type="GO" id="GO:0042612">
    <property type="term" value="C:MHC class I protein complex"/>
    <property type="evidence" value="ECO:0007669"/>
    <property type="project" value="UniProtKB-KW"/>
</dbReference>
<dbReference type="GO" id="GO:0002474">
    <property type="term" value="P:antigen processing and presentation of peptide antigen via MHC class I"/>
    <property type="evidence" value="ECO:0007669"/>
    <property type="project" value="UniProtKB-KW"/>
</dbReference>
<dbReference type="GO" id="GO:0006955">
    <property type="term" value="P:immune response"/>
    <property type="evidence" value="ECO:0007669"/>
    <property type="project" value="InterPro"/>
</dbReference>
<dbReference type="CDD" id="cd05770">
    <property type="entry name" value="IgC1_beta2m"/>
    <property type="match status" value="1"/>
</dbReference>
<dbReference type="FunFam" id="2.60.40.10:FF:001005">
    <property type="entry name" value="Beta-2-microglobulin"/>
    <property type="match status" value="1"/>
</dbReference>
<dbReference type="Gene3D" id="2.60.40.10">
    <property type="entry name" value="Immunoglobulins"/>
    <property type="match status" value="1"/>
</dbReference>
<dbReference type="InterPro" id="IPR015707">
    <property type="entry name" value="B2Microglobulin"/>
</dbReference>
<dbReference type="InterPro" id="IPR007110">
    <property type="entry name" value="Ig-like_dom"/>
</dbReference>
<dbReference type="InterPro" id="IPR036179">
    <property type="entry name" value="Ig-like_dom_sf"/>
</dbReference>
<dbReference type="InterPro" id="IPR013783">
    <property type="entry name" value="Ig-like_fold"/>
</dbReference>
<dbReference type="InterPro" id="IPR003006">
    <property type="entry name" value="Ig/MHC_CS"/>
</dbReference>
<dbReference type="InterPro" id="IPR003597">
    <property type="entry name" value="Ig_C1-set"/>
</dbReference>
<dbReference type="InterPro" id="IPR050160">
    <property type="entry name" value="MHC/Immunoglobulin"/>
</dbReference>
<dbReference type="PANTHER" id="PTHR19944:SF62">
    <property type="entry name" value="BETA-2-MICROGLOBULIN"/>
    <property type="match status" value="1"/>
</dbReference>
<dbReference type="PANTHER" id="PTHR19944">
    <property type="entry name" value="MHC CLASS II-RELATED"/>
    <property type="match status" value="1"/>
</dbReference>
<dbReference type="Pfam" id="PF07654">
    <property type="entry name" value="C1-set"/>
    <property type="match status" value="1"/>
</dbReference>
<dbReference type="SMART" id="SM00407">
    <property type="entry name" value="IGc1"/>
    <property type="match status" value="1"/>
</dbReference>
<dbReference type="SUPFAM" id="SSF48726">
    <property type="entry name" value="Immunoglobulin"/>
    <property type="match status" value="1"/>
</dbReference>
<dbReference type="PROSITE" id="PS50835">
    <property type="entry name" value="IG_LIKE"/>
    <property type="match status" value="1"/>
</dbReference>
<dbReference type="PROSITE" id="PS00290">
    <property type="entry name" value="IG_MHC"/>
    <property type="match status" value="1"/>
</dbReference>